<dbReference type="EMBL" id="AP009044">
    <property type="protein sequence ID" value="BAF55907.1"/>
    <property type="molecule type" value="Genomic_DNA"/>
</dbReference>
<dbReference type="RefSeq" id="WP_011898093.1">
    <property type="nucleotide sequence ID" value="NC_009342.1"/>
</dbReference>
<dbReference type="SMR" id="A4QI41"/>
<dbReference type="KEGG" id="cgt:cgR_2887"/>
<dbReference type="HOGENOM" id="CLU_046981_0_0_11"/>
<dbReference type="PhylomeDB" id="A4QI41"/>
<dbReference type="Proteomes" id="UP000006698">
    <property type="component" value="Chromosome"/>
</dbReference>
<dbReference type="Gene3D" id="1.20.1570.10">
    <property type="entry name" value="dip2346 domain like"/>
    <property type="match status" value="1"/>
</dbReference>
<dbReference type="Gene3D" id="3.10.630.10">
    <property type="entry name" value="dip2346 domain like"/>
    <property type="match status" value="1"/>
</dbReference>
<dbReference type="Gene3D" id="3.40.140.40">
    <property type="entry name" value="Domain of unknown function (DUF1846), C-terminal subdomain"/>
    <property type="match status" value="1"/>
</dbReference>
<dbReference type="HAMAP" id="MF_01567">
    <property type="entry name" value="UPF0371"/>
    <property type="match status" value="1"/>
</dbReference>
<dbReference type="InterPro" id="IPR014999">
    <property type="entry name" value="DUF1846"/>
</dbReference>
<dbReference type="InterPro" id="IPR048441">
    <property type="entry name" value="DUF1846_C"/>
</dbReference>
<dbReference type="InterPro" id="IPR048496">
    <property type="entry name" value="DUF1846_N"/>
</dbReference>
<dbReference type="NCBIfam" id="NF010184">
    <property type="entry name" value="PRK13663.1"/>
    <property type="match status" value="1"/>
</dbReference>
<dbReference type="Pfam" id="PF08903">
    <property type="entry name" value="DUF1846"/>
    <property type="match status" value="1"/>
</dbReference>
<dbReference type="Pfam" id="PF20921">
    <property type="entry name" value="DUF1846_C"/>
    <property type="match status" value="1"/>
</dbReference>
<dbReference type="PIRSF" id="PIRSF033132">
    <property type="entry name" value="DUF1846"/>
    <property type="match status" value="1"/>
</dbReference>
<comment type="similarity">
    <text evidence="1">Belongs to the UPF0371 family.</text>
</comment>
<reference key="1">
    <citation type="journal article" date="2007" name="Microbiology">
        <title>Comparative analysis of the Corynebacterium glutamicum group and complete genome sequence of strain R.</title>
        <authorList>
            <person name="Yukawa H."/>
            <person name="Omumasaba C.A."/>
            <person name="Nonaka H."/>
            <person name="Kos P."/>
            <person name="Okai N."/>
            <person name="Suzuki N."/>
            <person name="Suda M."/>
            <person name="Tsuge Y."/>
            <person name="Watanabe J."/>
            <person name="Ikeda Y."/>
            <person name="Vertes A.A."/>
            <person name="Inui M."/>
        </authorList>
    </citation>
    <scope>NUCLEOTIDE SEQUENCE [LARGE SCALE GENOMIC DNA]</scope>
    <source>
        <strain>R</strain>
    </source>
</reference>
<name>Y2887_CORGB</name>
<accession>A4QI41</accession>
<protein>
    <recommendedName>
        <fullName evidence="1">UPF0371 protein cgR_2887</fullName>
    </recommendedName>
</protein>
<gene>
    <name type="ordered locus">cgR_2887</name>
</gene>
<organism>
    <name type="scientific">Corynebacterium glutamicum (strain R)</name>
    <dbReference type="NCBI Taxonomy" id="340322"/>
    <lineage>
        <taxon>Bacteria</taxon>
        <taxon>Bacillati</taxon>
        <taxon>Actinomycetota</taxon>
        <taxon>Actinomycetes</taxon>
        <taxon>Mycobacteriales</taxon>
        <taxon>Corynebacteriaceae</taxon>
        <taxon>Corynebacterium</taxon>
    </lineage>
</organism>
<evidence type="ECO:0000255" key="1">
    <source>
        <dbReference type="HAMAP-Rule" id="MF_01567"/>
    </source>
</evidence>
<proteinExistence type="inferred from homology"/>
<sequence length="495" mass="55111">MSIGFDRDLYIKMQSRHINERREQIGGKLYLEMGGKLFDDMHASRVLPGFTPDNKIAMLTELKDELEILVAINAKDLERKKTRADLDISYEEDVLRLIDVFRELGFLAEHVVLTQLEDDNYQALTFKQRLERLGLKVAVHRVIPGYPTDARRIVSEDGFGINEYVETTRNLVVVTAPGPGSGKLATCLSQIYGDHQRGIKSGYAKFETFPIWNLPLEHPVNLAYEAATADLDDINIIDPFHLAAYDTKATSYNRDVEVFPLLKTMLEMLSGSSPYKSPTDMGVNMVGSAIIDDAACQEAARQEIVRRYFKALVDERREEQDDTISARIAIVMSKAGCTVEDRRVVARALDVEESTGAPGCAIELNDGRLVTGKTSELLGCSAAMVLNALKELAGIDRSVDLLSPESIEPIQSLKTQHLGSRNPRLHTDEVLIALSVSAANSETARRALDELKNLRGCDVHTTTILGSVDEGIFRNLGVLVTSEPKYQRKALYRKR</sequence>
<feature type="chain" id="PRO_1000069096" description="UPF0371 protein cgR_2887">
    <location>
        <begin position="1"/>
        <end position="495"/>
    </location>
</feature>